<reference key="1">
    <citation type="journal article" date="1992" name="Infect. Immun.">
        <title>Molecular characterization of an RTX toxin determinant from Actinobacillus suis.</title>
        <authorList>
            <person name="Burrows L.L."/>
            <person name="Lo R.Y."/>
        </authorList>
    </citation>
    <scope>NUCLEOTIDE SEQUENCE [GENOMIC DNA]</scope>
    <source>
        <strain>3714</strain>
    </source>
</reference>
<sequence length="956" mass="102453">MSKITLSSLKSSLQQGLKNGKNKLNQAGTTLKNGLTQTGHSLQNGAKKLILYIPQGYDSGQGNGIQDLVKAANDLGIEVWREERSNLDIAKTSFDTTQKILGFTDRGIVLFAPQLDNLLKKNPKIGNTLGSASSISQNIGKANTVLGGIQSILGSVLSGVNLNELLQNKDPNQLELAKAGLELTNELVGNIASSVQTVDAFAEQISKLGSHLQNVKGLGGLSNKLQNLPDLGKASLGLDIISGLLSGASAGLILADKKASTEKKAAAGVEFANQIIGNVTKAVSSYILAQRVASGLSSTGPVAALIASTVALAVSPLSFLNVADKFKQADLIKSYSERFQKLGYDGDRLLADFHRETGTIDASVTTINTALAAISGGVGAASAGSLVGAPVALLVAGVTGLITTILEYSKQAMFEHVANKVHDRIVEWEKKHNKNYFEQGYDSRHLADLQDNMKFLINLNKELQAERVVAITQQRWDNQIGDLAAISRRTDKISSGKAYVDAFEEGNTSPSIHPYSIDNKNGIINISNTNRKTQSVLFRTPLLTPGEENRERIQEGKNSYITKLHIQRVDSWTVTVGDASSSVDFTNVVQRIAVKFDDAGNIIESKDTKIIANLGAGNDNVFVGSSTTVIDGGDGHDRVHYSRGEYGALVIDATAETEKGSYSVKRYVGDSKALHETIATHQTNVGNREEKIEYRREDDRFHTGYTVTDSLKSVEEIIGSQFNDIFKGSQFDDVFHGGNGVDTIDGNDGDDHLFGGAGDDVIDGGNGNNFLVGGTGNDIISGGKDNDIYVHKTGDGNDSITDSGGQDKLAFSDVNLKDLTFKKVDSSLEIINQKGEKVRIGNWFLEDDLASTVANYKATNDRKIEEIIGKGGERITSEQVDKLIKEGNNQISAEALSKVVNDYNTSKDRQNVSNSLAKLISSVGSFTSSSDFRNNLGTYVPSSIDVSNNIQLARAA</sequence>
<feature type="chain" id="PRO_0000196217" description="Hemolysin">
    <location>
        <begin position="1"/>
        <end position="956"/>
    </location>
</feature>
<feature type="transmembrane region" description="Helical" evidence="2">
    <location>
        <begin position="238"/>
        <end position="254"/>
    </location>
</feature>
<feature type="transmembrane region" description="Helical" evidence="2">
    <location>
        <begin position="302"/>
        <end position="320"/>
    </location>
</feature>
<feature type="transmembrane region" description="Helical" evidence="2">
    <location>
        <begin position="383"/>
        <end position="406"/>
    </location>
</feature>
<feature type="repeat" description="Hemolysin-type calcium-binding 1">
    <location>
        <begin position="718"/>
        <end position="735"/>
    </location>
</feature>
<feature type="repeat" description="Hemolysin-type calcium-binding 2">
    <location>
        <begin position="736"/>
        <end position="753"/>
    </location>
</feature>
<feature type="repeat" description="Hemolysin-type calcium-binding 3">
    <location>
        <begin position="754"/>
        <end position="771"/>
    </location>
</feature>
<feature type="repeat" description="Hemolysin-type calcium-binding 4">
    <location>
        <begin position="772"/>
        <end position="789"/>
    </location>
</feature>
<feature type="repeat" description="Hemolysin-type calcium-binding 5">
    <location>
        <begin position="792"/>
        <end position="809"/>
    </location>
</feature>
<accession>Q00951</accession>
<proteinExistence type="inferred from homology"/>
<gene>
    <name type="primary">appA</name>
    <name type="synonym">clyIIA</name>
    <name type="synonym">cytC</name>
    <name type="synonym">hlyIIA</name>
</gene>
<evidence type="ECO:0000250" key="1">
    <source>
        <dbReference type="UniProtKB" id="P08715"/>
    </source>
</evidence>
<evidence type="ECO:0000255" key="2"/>
<evidence type="ECO:0000305" key="3"/>
<name>HLYA_ACTSU</name>
<keyword id="KW-0106">Calcium</keyword>
<keyword id="KW-0204">Cytolysis</keyword>
<keyword id="KW-0354">Hemolysis</keyword>
<keyword id="KW-1032">Host cell membrane</keyword>
<keyword id="KW-1043">Host membrane</keyword>
<keyword id="KW-0449">Lipoprotein</keyword>
<keyword id="KW-0472">Membrane</keyword>
<keyword id="KW-0519">Myristate</keyword>
<keyword id="KW-0677">Repeat</keyword>
<keyword id="KW-0964">Secreted</keyword>
<keyword id="KW-0800">Toxin</keyword>
<keyword id="KW-0812">Transmembrane</keyword>
<keyword id="KW-1133">Transmembrane helix</keyword>
<keyword id="KW-0843">Virulence</keyword>
<comment type="function">
    <text evidence="1">Bacterial hemolysins are exotoxins that attack host cell membranes and cause cell rupture by forming a pore.</text>
</comment>
<comment type="subcellular location">
    <subcellularLocation>
        <location evidence="1">Secreted</location>
    </subcellularLocation>
    <subcellularLocation>
        <location evidence="1">Host cell membrane</location>
        <topology evidence="1">Multi-pass membrane protein</topology>
    </subcellularLocation>
</comment>
<comment type="domain">
    <text>The Gly-rich region is probably involved in binding calcium, which is required for target cell-binding or cytolytic activity.</text>
</comment>
<comment type="domain">
    <text evidence="1">The three transmembrane domains are believed to be involved in pore formation by the cytotoxin.</text>
</comment>
<comment type="PTM">
    <text evidence="1">Fatty acylated by LktC; the toxin only becomes active when modified.</text>
</comment>
<comment type="similarity">
    <text evidence="3">Belongs to the RTX prokaryotic toxin (TC 1.C.11) family.</text>
</comment>
<protein>
    <recommendedName>
        <fullName>Hemolysin</fullName>
    </recommendedName>
    <alternativeName>
        <fullName>APPA</fullName>
    </alternativeName>
    <alternativeName>
        <fullName>CLY-IIA</fullName>
    </alternativeName>
    <alternativeName>
        <fullName>CYTC</fullName>
    </alternativeName>
    <alternativeName>
        <fullName>Cytolysin II</fullName>
    </alternativeName>
    <alternativeName>
        <fullName>HLY-IIA</fullName>
    </alternativeName>
</protein>
<dbReference type="EMBL" id="M90440">
    <property type="protein sequence ID" value="AAA21918.1"/>
    <property type="molecule type" value="Genomic_DNA"/>
</dbReference>
<dbReference type="PIR" id="A43834">
    <property type="entry name" value="A43834"/>
</dbReference>
<dbReference type="SMR" id="Q00951"/>
<dbReference type="GO" id="GO:0005576">
    <property type="term" value="C:extracellular region"/>
    <property type="evidence" value="ECO:0007669"/>
    <property type="project" value="UniProtKB-SubCell"/>
</dbReference>
<dbReference type="GO" id="GO:0020002">
    <property type="term" value="C:host cell plasma membrane"/>
    <property type="evidence" value="ECO:0007669"/>
    <property type="project" value="UniProtKB-SubCell"/>
</dbReference>
<dbReference type="GO" id="GO:0016020">
    <property type="term" value="C:membrane"/>
    <property type="evidence" value="ECO:0007669"/>
    <property type="project" value="UniProtKB-KW"/>
</dbReference>
<dbReference type="GO" id="GO:0005509">
    <property type="term" value="F:calcium ion binding"/>
    <property type="evidence" value="ECO:0007669"/>
    <property type="project" value="InterPro"/>
</dbReference>
<dbReference type="GO" id="GO:0015267">
    <property type="term" value="F:channel activity"/>
    <property type="evidence" value="ECO:0007669"/>
    <property type="project" value="InterPro"/>
</dbReference>
<dbReference type="GO" id="GO:0090729">
    <property type="term" value="F:toxin activity"/>
    <property type="evidence" value="ECO:0007669"/>
    <property type="project" value="UniProtKB-KW"/>
</dbReference>
<dbReference type="GO" id="GO:0031640">
    <property type="term" value="P:killing of cells of another organism"/>
    <property type="evidence" value="ECO:0007669"/>
    <property type="project" value="UniProtKB-KW"/>
</dbReference>
<dbReference type="Gene3D" id="2.150.10.10">
    <property type="entry name" value="Serralysin-like metalloprotease, C-terminal"/>
    <property type="match status" value="1"/>
</dbReference>
<dbReference type="InterPro" id="IPR001343">
    <property type="entry name" value="Hemolysn_Ca-bd"/>
</dbReference>
<dbReference type="InterPro" id="IPR013550">
    <property type="entry name" value="RTX_C"/>
</dbReference>
<dbReference type="InterPro" id="IPR018504">
    <property type="entry name" value="RTX_pore_form"/>
</dbReference>
<dbReference type="InterPro" id="IPR050557">
    <property type="entry name" value="RTX_toxin/Mannuronan_C5-epim"/>
</dbReference>
<dbReference type="InterPro" id="IPR003995">
    <property type="entry name" value="RTX_toxin_determinant-A"/>
</dbReference>
<dbReference type="InterPro" id="IPR011049">
    <property type="entry name" value="Serralysin-like_metalloprot_C"/>
</dbReference>
<dbReference type="NCBIfam" id="NF033943">
    <property type="entry name" value="RTX_toxin"/>
    <property type="match status" value="1"/>
</dbReference>
<dbReference type="PANTHER" id="PTHR38340">
    <property type="entry name" value="S-LAYER PROTEIN"/>
    <property type="match status" value="1"/>
</dbReference>
<dbReference type="PANTHER" id="PTHR38340:SF1">
    <property type="entry name" value="S-LAYER PROTEIN"/>
    <property type="match status" value="1"/>
</dbReference>
<dbReference type="Pfam" id="PF00353">
    <property type="entry name" value="HemolysinCabind"/>
    <property type="match status" value="2"/>
</dbReference>
<dbReference type="Pfam" id="PF02382">
    <property type="entry name" value="RTX"/>
    <property type="match status" value="1"/>
</dbReference>
<dbReference type="Pfam" id="PF08339">
    <property type="entry name" value="RTX_C"/>
    <property type="match status" value="1"/>
</dbReference>
<dbReference type="PRINTS" id="PR00313">
    <property type="entry name" value="CABNDNGRPT"/>
</dbReference>
<dbReference type="PRINTS" id="PR01488">
    <property type="entry name" value="RTXTOXINA"/>
</dbReference>
<dbReference type="SUPFAM" id="SSF51120">
    <property type="entry name" value="beta-Roll"/>
    <property type="match status" value="1"/>
</dbReference>
<dbReference type="PROSITE" id="PS00330">
    <property type="entry name" value="HEMOLYSIN_CALCIUM"/>
    <property type="match status" value="1"/>
</dbReference>
<organism>
    <name type="scientific">Actinobacillus suis</name>
    <dbReference type="NCBI Taxonomy" id="716"/>
    <lineage>
        <taxon>Bacteria</taxon>
        <taxon>Pseudomonadati</taxon>
        <taxon>Pseudomonadota</taxon>
        <taxon>Gammaproteobacteria</taxon>
        <taxon>Pasteurellales</taxon>
        <taxon>Pasteurellaceae</taxon>
        <taxon>Actinobacillus</taxon>
    </lineage>
</organism>